<feature type="chain" id="PRO_0000299509" description="UPF0312 protein SAR2769">
    <location>
        <begin position="1"/>
        <end position="171"/>
    </location>
</feature>
<protein>
    <recommendedName>
        <fullName>UPF0312 protein SAR2769</fullName>
    </recommendedName>
</protein>
<proteinExistence type="inferred from homology"/>
<dbReference type="EMBL" id="BX571856">
    <property type="protein sequence ID" value="CAG41744.1"/>
    <property type="molecule type" value="Genomic_DNA"/>
</dbReference>
<dbReference type="RefSeq" id="WP_000181127.1">
    <property type="nucleotide sequence ID" value="NC_002952.2"/>
</dbReference>
<dbReference type="SMR" id="Q6GDB7"/>
<dbReference type="KEGG" id="sar:SAR2769"/>
<dbReference type="HOGENOM" id="CLU_071003_3_0_9"/>
<dbReference type="Proteomes" id="UP000000596">
    <property type="component" value="Chromosome"/>
</dbReference>
<dbReference type="Gene3D" id="2.40.128.110">
    <property type="entry name" value="Lipid/polyisoprenoid-binding, YceI-like"/>
    <property type="match status" value="1"/>
</dbReference>
<dbReference type="InterPro" id="IPR007372">
    <property type="entry name" value="Lipid/polyisoprenoid-bd_YceI"/>
</dbReference>
<dbReference type="InterPro" id="IPR036761">
    <property type="entry name" value="TTHA0802/YceI-like_sf"/>
</dbReference>
<dbReference type="PANTHER" id="PTHR34406">
    <property type="entry name" value="PROTEIN YCEI"/>
    <property type="match status" value="1"/>
</dbReference>
<dbReference type="PANTHER" id="PTHR34406:SF1">
    <property type="entry name" value="PROTEIN YCEI"/>
    <property type="match status" value="1"/>
</dbReference>
<dbReference type="Pfam" id="PF04264">
    <property type="entry name" value="YceI"/>
    <property type="match status" value="1"/>
</dbReference>
<dbReference type="SMART" id="SM00867">
    <property type="entry name" value="YceI"/>
    <property type="match status" value="1"/>
</dbReference>
<dbReference type="SUPFAM" id="SSF101874">
    <property type="entry name" value="YceI-like"/>
    <property type="match status" value="1"/>
</dbReference>
<accession>Q6GDB7</accession>
<sequence>MTNFTFDGAHSSLEFQIKHLMVSKVKGSFDQFDVAVEGDINDFSTLKATATIIPSSINTKNEARDNHLKSGDFFGTDEFDKITFVTKSITESKVVGDLTIKGITNEETFDVEFNGVSKNPMDGSQVTGIIVTGIINREKYGINFNQTLETGGVMLGKDVKFEASAEFSISE</sequence>
<organism>
    <name type="scientific">Staphylococcus aureus (strain MRSA252)</name>
    <dbReference type="NCBI Taxonomy" id="282458"/>
    <lineage>
        <taxon>Bacteria</taxon>
        <taxon>Bacillati</taxon>
        <taxon>Bacillota</taxon>
        <taxon>Bacilli</taxon>
        <taxon>Bacillales</taxon>
        <taxon>Staphylococcaceae</taxon>
        <taxon>Staphylococcus</taxon>
    </lineage>
</organism>
<reference key="1">
    <citation type="journal article" date="2004" name="Proc. Natl. Acad. Sci. U.S.A.">
        <title>Complete genomes of two clinical Staphylococcus aureus strains: evidence for the rapid evolution of virulence and drug resistance.</title>
        <authorList>
            <person name="Holden M.T.G."/>
            <person name="Feil E.J."/>
            <person name="Lindsay J.A."/>
            <person name="Peacock S.J."/>
            <person name="Day N.P.J."/>
            <person name="Enright M.C."/>
            <person name="Foster T.J."/>
            <person name="Moore C.E."/>
            <person name="Hurst L."/>
            <person name="Atkin R."/>
            <person name="Barron A."/>
            <person name="Bason N."/>
            <person name="Bentley S.D."/>
            <person name="Chillingworth C."/>
            <person name="Chillingworth T."/>
            <person name="Churcher C."/>
            <person name="Clark L."/>
            <person name="Corton C."/>
            <person name="Cronin A."/>
            <person name="Doggett J."/>
            <person name="Dowd L."/>
            <person name="Feltwell T."/>
            <person name="Hance Z."/>
            <person name="Harris B."/>
            <person name="Hauser H."/>
            <person name="Holroyd S."/>
            <person name="Jagels K."/>
            <person name="James K.D."/>
            <person name="Lennard N."/>
            <person name="Line A."/>
            <person name="Mayes R."/>
            <person name="Moule S."/>
            <person name="Mungall K."/>
            <person name="Ormond D."/>
            <person name="Quail M.A."/>
            <person name="Rabbinowitsch E."/>
            <person name="Rutherford K.M."/>
            <person name="Sanders M."/>
            <person name="Sharp S."/>
            <person name="Simmonds M."/>
            <person name="Stevens K."/>
            <person name="Whitehead S."/>
            <person name="Barrell B.G."/>
            <person name="Spratt B.G."/>
            <person name="Parkhill J."/>
        </authorList>
    </citation>
    <scope>NUCLEOTIDE SEQUENCE [LARGE SCALE GENOMIC DNA]</scope>
    <source>
        <strain>MRSA252</strain>
    </source>
</reference>
<evidence type="ECO:0000305" key="1"/>
<comment type="similarity">
    <text evidence="1">Belongs to the UPF0312 family.</text>
</comment>
<gene>
    <name type="ordered locus">SAR2769</name>
</gene>
<name>Y2769_STAAR</name>